<sequence>MASALEQFVNSVRQLSAQGQMTQLCELINKSGELLAKNLSHLDTVLGALDVQEHSLGVLAVLFVKFSMPSVPDFETLFSQVQLFISTCNGEHIRYATDTFAGLCHQLTNALVERKQPLRGIGVLRQAIDKMQMNTNQLTSVHADLCQLCLLAKCFKPALPYLDVDMVDICKENGAYDAKHFLCYYYYGGMVYTGLKNFERALYFYEQAITTPAMAVSHIMLESYKKYILVSLILLGKVQQLPKYTSQIVGRFIKPLSNAYHELAQVYSTNNPSELRSLVTKHSEIFTRDNNMGLVKQCLSSLYKKNIQRLTKTFLTLSLQDMASRVQLSGPQEAEKYVLHMIEDGEIFASINQKDGMVSFHDNPEKYNNPAMLHNIDQEMLKCIELDERLKAMDQEITVNPQFVQKSMGSQEDDSGNKPSSYS</sequence>
<evidence type="ECO:0000250" key="1">
    <source>
        <dbReference type="UniProtKB" id="O88543"/>
    </source>
</evidence>
<evidence type="ECO:0000250" key="2">
    <source>
        <dbReference type="UniProtKB" id="Q9UNS2"/>
    </source>
</evidence>
<evidence type="ECO:0000255" key="3">
    <source>
        <dbReference type="PROSITE-ProRule" id="PRU01185"/>
    </source>
</evidence>
<evidence type="ECO:0000256" key="4">
    <source>
        <dbReference type="SAM" id="MobiDB-lite"/>
    </source>
</evidence>
<evidence type="ECO:0000305" key="5"/>
<protein>
    <recommendedName>
        <fullName>COP9 signalosome complex subunit 3</fullName>
        <shortName>SGN3</shortName>
        <shortName>Signalosome subunit 3</shortName>
    </recommendedName>
</protein>
<gene>
    <name type="primary">COPS3</name>
    <name type="synonym">CSN3</name>
</gene>
<organism>
    <name type="scientific">Bos taurus</name>
    <name type="common">Bovine</name>
    <dbReference type="NCBI Taxonomy" id="9913"/>
    <lineage>
        <taxon>Eukaryota</taxon>
        <taxon>Metazoa</taxon>
        <taxon>Chordata</taxon>
        <taxon>Craniata</taxon>
        <taxon>Vertebrata</taxon>
        <taxon>Euteleostomi</taxon>
        <taxon>Mammalia</taxon>
        <taxon>Eutheria</taxon>
        <taxon>Laurasiatheria</taxon>
        <taxon>Artiodactyla</taxon>
        <taxon>Ruminantia</taxon>
        <taxon>Pecora</taxon>
        <taxon>Bovidae</taxon>
        <taxon>Bovinae</taxon>
        <taxon>Bos</taxon>
    </lineage>
</organism>
<accession>A6H7B5</accession>
<dbReference type="EMBL" id="BC146183">
    <property type="protein sequence ID" value="AAI46184.1"/>
    <property type="molecule type" value="mRNA"/>
</dbReference>
<dbReference type="RefSeq" id="NP_001092374.1">
    <property type="nucleotide sequence ID" value="NM_001098904.1"/>
</dbReference>
<dbReference type="SMR" id="A6H7B5"/>
<dbReference type="FunCoup" id="A6H7B5">
    <property type="interactions" value="4113"/>
</dbReference>
<dbReference type="STRING" id="9913.ENSBTAP00000025255"/>
<dbReference type="PaxDb" id="9913-ENSBTAP00000025255"/>
<dbReference type="PeptideAtlas" id="A6H7B5"/>
<dbReference type="Ensembl" id="ENSBTAT00000025255.5">
    <property type="protein sequence ID" value="ENSBTAP00000025255.3"/>
    <property type="gene ID" value="ENSBTAG00000018973.5"/>
</dbReference>
<dbReference type="GeneID" id="507932"/>
<dbReference type="KEGG" id="bta:507932"/>
<dbReference type="CTD" id="8533"/>
<dbReference type="VEuPathDB" id="HostDB:ENSBTAG00000018973"/>
<dbReference type="VGNC" id="VGNC:27600">
    <property type="gene designation" value="COPS3"/>
</dbReference>
<dbReference type="eggNOG" id="KOG2582">
    <property type="taxonomic scope" value="Eukaryota"/>
</dbReference>
<dbReference type="GeneTree" id="ENSGT00940000153653"/>
<dbReference type="HOGENOM" id="CLU_028825_0_1_1"/>
<dbReference type="InParanoid" id="A6H7B5"/>
<dbReference type="OMA" id="NHYHDLV"/>
<dbReference type="OrthoDB" id="29061at2759"/>
<dbReference type="TreeFam" id="TF101146"/>
<dbReference type="Reactome" id="R-BTA-5696394">
    <property type="pathway name" value="DNA Damage Recognition in GG-NER"/>
</dbReference>
<dbReference type="Reactome" id="R-BTA-6781823">
    <property type="pathway name" value="Formation of TC-NER Pre-Incision Complex"/>
</dbReference>
<dbReference type="Reactome" id="R-BTA-8856825">
    <property type="pathway name" value="Cargo recognition for clathrin-mediated endocytosis"/>
</dbReference>
<dbReference type="Reactome" id="R-BTA-8951664">
    <property type="pathway name" value="Neddylation"/>
</dbReference>
<dbReference type="Proteomes" id="UP000009136">
    <property type="component" value="Chromosome 19"/>
</dbReference>
<dbReference type="Bgee" id="ENSBTAG00000018973">
    <property type="expression patterns" value="Expressed in corpus luteum and 107 other cell types or tissues"/>
</dbReference>
<dbReference type="GO" id="GO:0008180">
    <property type="term" value="C:COP9 signalosome"/>
    <property type="evidence" value="ECO:0000318"/>
    <property type="project" value="GO_Central"/>
</dbReference>
<dbReference type="GO" id="GO:0005829">
    <property type="term" value="C:cytosol"/>
    <property type="evidence" value="ECO:0007669"/>
    <property type="project" value="Ensembl"/>
</dbReference>
<dbReference type="GO" id="GO:0005654">
    <property type="term" value="C:nucleoplasm"/>
    <property type="evidence" value="ECO:0007669"/>
    <property type="project" value="Ensembl"/>
</dbReference>
<dbReference type="GO" id="GO:0048471">
    <property type="term" value="C:perinuclear region of cytoplasm"/>
    <property type="evidence" value="ECO:0007669"/>
    <property type="project" value="Ensembl"/>
</dbReference>
<dbReference type="GO" id="GO:0001701">
    <property type="term" value="P:in utero embryonic development"/>
    <property type="evidence" value="ECO:0007669"/>
    <property type="project" value="Ensembl"/>
</dbReference>
<dbReference type="GO" id="GO:0000338">
    <property type="term" value="P:protein deneddylation"/>
    <property type="evidence" value="ECO:0007669"/>
    <property type="project" value="Ensembl"/>
</dbReference>
<dbReference type="GO" id="GO:0043516">
    <property type="term" value="P:regulation of DNA damage response, signal transduction by p53 class mediator"/>
    <property type="evidence" value="ECO:0007669"/>
    <property type="project" value="Ensembl"/>
</dbReference>
<dbReference type="GO" id="GO:0006511">
    <property type="term" value="P:ubiquitin-dependent protein catabolic process"/>
    <property type="evidence" value="ECO:0000318"/>
    <property type="project" value="GO_Central"/>
</dbReference>
<dbReference type="FunFam" id="1.10.10.10:FF:000354">
    <property type="entry name" value="COP9 signalosome complex subunit 3"/>
    <property type="match status" value="1"/>
</dbReference>
<dbReference type="FunFam" id="1.25.40.570:FF:000008">
    <property type="entry name" value="COP9 signalosome complex subunit 3"/>
    <property type="match status" value="1"/>
</dbReference>
<dbReference type="Gene3D" id="1.25.40.570">
    <property type="match status" value="1"/>
</dbReference>
<dbReference type="InterPro" id="IPR055089">
    <property type="entry name" value="COP9_N"/>
</dbReference>
<dbReference type="InterPro" id="IPR050756">
    <property type="entry name" value="CSN3"/>
</dbReference>
<dbReference type="InterPro" id="IPR048621">
    <property type="entry name" value="CSN3_C"/>
</dbReference>
<dbReference type="InterPro" id="IPR000717">
    <property type="entry name" value="PCI_dom"/>
</dbReference>
<dbReference type="InterPro" id="IPR036390">
    <property type="entry name" value="WH_DNA-bd_sf"/>
</dbReference>
<dbReference type="PANTHER" id="PTHR10758">
    <property type="entry name" value="26S PROTEASOME NON-ATPASE REGULATORY SUBUNIT 3/COP9 SIGNALOSOME COMPLEX SUBUNIT 3"/>
    <property type="match status" value="1"/>
</dbReference>
<dbReference type="PANTHER" id="PTHR10758:SF1">
    <property type="entry name" value="COP9 SIGNALOSOME COMPLEX SUBUNIT 3"/>
    <property type="match status" value="1"/>
</dbReference>
<dbReference type="Pfam" id="PF22788">
    <property type="entry name" value="COP9_hel_rpt"/>
    <property type="match status" value="1"/>
</dbReference>
<dbReference type="Pfam" id="PF21215">
    <property type="entry name" value="CSN3-like_C"/>
    <property type="match status" value="1"/>
</dbReference>
<dbReference type="Pfam" id="PF01399">
    <property type="entry name" value="PCI"/>
    <property type="match status" value="1"/>
</dbReference>
<dbReference type="SMART" id="SM00088">
    <property type="entry name" value="PINT"/>
    <property type="match status" value="1"/>
</dbReference>
<dbReference type="SUPFAM" id="SSF46785">
    <property type="entry name" value="Winged helix' DNA-binding domain"/>
    <property type="match status" value="1"/>
</dbReference>
<dbReference type="PROSITE" id="PS50250">
    <property type="entry name" value="PCI"/>
    <property type="match status" value="1"/>
</dbReference>
<comment type="function">
    <text evidence="1 2">Component of the COP9 signalosome complex (CSN), a complex involved in various cellular and developmental processes (By similarity). The CSN complex is an essential regulator of the ubiquitin (Ubl) conjugation pathway by mediating the deneddylation of the cullin subunits of SCF-type E3 ligase complexes, leading to decrease the Ubl ligase activity of SCF-type complexes such as SCF, CSA or DDB2 (By similarity). The complex is also involved in phosphorylation of p53/TP53, c-jun/JUN, IkappaBalpha/NFKBIA, ITPK1 and IRF8/ICSBP, possibly via its association with CK2 and PKD kinases (By similarity). CSN-dependent phosphorylation of TP53 and JUN promotes and protects degradation by the Ubl system, respectively (By similarity). Essential to maintain the survival of epiblast cells and thus the development of the postimplantation embryo (By similarity).</text>
</comment>
<comment type="subunit">
    <text evidence="2">Component of the CSN complex, composed of COPS1/GPS1, COPS2, COPS3, COPS4, COPS5, COPS6, COPS7 (COPS7A or COPS7B), COPS8 and COPS9 (By similarity). In the complex, it probably interacts directly with COPS1, COPS4, COPS8 and COPS9 (By similarity). Interacts with CK2 and PKD (By similarity). Interacts with the translation initiation factor EIF3S6 and IKBKG (By similarity). Interacts with ERCC6 (By similarity).</text>
</comment>
<comment type="subcellular location">
    <subcellularLocation>
        <location evidence="2">Cytoplasm</location>
    </subcellularLocation>
    <subcellularLocation>
        <location evidence="2">Nucleus</location>
    </subcellularLocation>
</comment>
<comment type="similarity">
    <text evidence="5">Belongs to the CSN3 family.</text>
</comment>
<feature type="initiator methionine" description="Removed" evidence="2">
    <location>
        <position position="1"/>
    </location>
</feature>
<feature type="chain" id="PRO_0000312644" description="COP9 signalosome complex subunit 3">
    <location>
        <begin position="2"/>
        <end position="423"/>
    </location>
</feature>
<feature type="domain" description="PCI" evidence="3">
    <location>
        <begin position="197"/>
        <end position="365"/>
    </location>
</feature>
<feature type="region of interest" description="Disordered" evidence="4">
    <location>
        <begin position="402"/>
        <end position="423"/>
    </location>
</feature>
<feature type="modified residue" description="N-acetylalanine" evidence="2">
    <location>
        <position position="2"/>
    </location>
</feature>
<feature type="modified residue" description="Phosphoserine" evidence="1">
    <location>
        <position position="407"/>
    </location>
</feature>
<feature type="modified residue" description="Phosphoserine" evidence="2">
    <location>
        <position position="410"/>
    </location>
</feature>
<feature type="modified residue" description="Phosphoserine" evidence="2">
    <location>
        <position position="423"/>
    </location>
</feature>
<proteinExistence type="evidence at transcript level"/>
<reference key="1">
    <citation type="submission" date="2007-06" db="EMBL/GenBank/DDBJ databases">
        <authorList>
            <consortium name="NIH - Mammalian Gene Collection (MGC) project"/>
        </authorList>
    </citation>
    <scope>NUCLEOTIDE SEQUENCE [LARGE SCALE MRNA]</scope>
    <source>
        <strain>Hereford</strain>
        <tissue>Thalamus</tissue>
    </source>
</reference>
<name>CSN3_BOVIN</name>
<keyword id="KW-0007">Acetylation</keyword>
<keyword id="KW-0963">Cytoplasm</keyword>
<keyword id="KW-0539">Nucleus</keyword>
<keyword id="KW-0597">Phosphoprotein</keyword>
<keyword id="KW-1185">Reference proteome</keyword>
<keyword id="KW-0736">Signalosome</keyword>